<accession>Q9HGI4</accession>
<sequence length="662" mass="73780">MSDPNQNGQQGGQQNAGGNYYQQYFQKLTQQAQAGGGYQPYGGYGGYGGYGGYQPYGGYQQFYQDGQQAQQGAYNGYPYQAQGAPGGFNNYNNQFQPQQQSQGMTLDDFHKQKQTSQSAPPKQKKSLKLVSSSGIKLANATKKPKEDEKKEEEPKKEEKKAEPKEQESKKEEPKREGTPRPAAAKDEKKEDLPKLEKLKIKEEQAAANASGADSLIKEQEEEVDEGVVNDMFGGKDHMSIIFMGHVDAGKSTMGGNILYMTGSVDKRTVEKYEREAKDAGKQGWYLSWVMDTNREERDDGKTIEVGRAYFETEKRRYTILDAPGHKMYVSEMIGGASQADVGILVISARKGEYETGFEKGGQTREHALLAKTQGVNKLIVTINKMDDPTVNWSKERYDQCVKNLSNFLKAIGYNVKEEVVFMPVSGYSGAGLGTRVDPKECPWYDGPALLEYMDNMSHVDRKMNAPFMLPIAAKMRDMGTIVEGKIESGHIRKGHSTLLMPNKIPVEIQNIYNETENEVDMAICGEQVKLKIKGVEEEDIAPGFVLTSPKNPVKNVTRFVAQVAIVELKSILSSGFSCVMHVHTAIEEVRITKLLHKLERGTNRKSKKPPAFAKKGMKIIAVLETERPVCVETYQDYPQLGRFTLRDQGTTIAIGKIVKIIE</sequence>
<dbReference type="EMBL" id="AB039753">
    <property type="protein sequence ID" value="BAB12684.2"/>
    <property type="molecule type" value="Genomic_DNA"/>
</dbReference>
<dbReference type="SMR" id="Q9HGI4"/>
<dbReference type="eggNOG" id="KOG0459">
    <property type="taxonomic scope" value="Eukaryota"/>
</dbReference>
<dbReference type="GO" id="GO:0005737">
    <property type="term" value="C:cytoplasm"/>
    <property type="evidence" value="ECO:0007669"/>
    <property type="project" value="UniProtKB-SubCell"/>
</dbReference>
<dbReference type="GO" id="GO:0005525">
    <property type="term" value="F:GTP binding"/>
    <property type="evidence" value="ECO:0007669"/>
    <property type="project" value="UniProtKB-KW"/>
</dbReference>
<dbReference type="GO" id="GO:0003924">
    <property type="term" value="F:GTPase activity"/>
    <property type="evidence" value="ECO:0007669"/>
    <property type="project" value="InterPro"/>
</dbReference>
<dbReference type="GO" id="GO:0003747">
    <property type="term" value="F:translation release factor activity"/>
    <property type="evidence" value="ECO:0007669"/>
    <property type="project" value="InterPro"/>
</dbReference>
<dbReference type="GO" id="GO:0000288">
    <property type="term" value="P:nuclear-transcribed mRNA catabolic process, deadenylation-dependent decay"/>
    <property type="evidence" value="ECO:0007669"/>
    <property type="project" value="InterPro"/>
</dbReference>
<dbReference type="GO" id="GO:0006417">
    <property type="term" value="P:regulation of translation"/>
    <property type="evidence" value="ECO:0007669"/>
    <property type="project" value="UniProtKB-ARBA"/>
</dbReference>
<dbReference type="CDD" id="cd01883">
    <property type="entry name" value="EF1_alpha"/>
    <property type="match status" value="1"/>
</dbReference>
<dbReference type="CDD" id="cd03704">
    <property type="entry name" value="eRF3_C_III"/>
    <property type="match status" value="1"/>
</dbReference>
<dbReference type="CDD" id="cd04089">
    <property type="entry name" value="eRF3_II"/>
    <property type="match status" value="1"/>
</dbReference>
<dbReference type="FunFam" id="2.40.30.10:FF:000017">
    <property type="entry name" value="Eukaryotic peptide chain release factor GTP-binding subunit"/>
    <property type="match status" value="1"/>
</dbReference>
<dbReference type="FunFam" id="3.40.50.300:FF:000503">
    <property type="entry name" value="Peptide chain release factor subunit 3"/>
    <property type="match status" value="1"/>
</dbReference>
<dbReference type="FunFam" id="2.40.30.10:FF:000061">
    <property type="entry name" value="Translation release factor eRF3, putative"/>
    <property type="match status" value="1"/>
</dbReference>
<dbReference type="Gene3D" id="3.40.50.300">
    <property type="entry name" value="P-loop containing nucleotide triphosphate hydrolases"/>
    <property type="match status" value="1"/>
</dbReference>
<dbReference type="Gene3D" id="2.40.30.10">
    <property type="entry name" value="Translation factors"/>
    <property type="match status" value="2"/>
</dbReference>
<dbReference type="InterPro" id="IPR004161">
    <property type="entry name" value="EFTu-like_2"/>
</dbReference>
<dbReference type="InterPro" id="IPR031157">
    <property type="entry name" value="G_TR_CS"/>
</dbReference>
<dbReference type="InterPro" id="IPR054696">
    <property type="entry name" value="GTP-eEF1A_C"/>
</dbReference>
<dbReference type="InterPro" id="IPR027417">
    <property type="entry name" value="P-loop_NTPase"/>
</dbReference>
<dbReference type="InterPro" id="IPR003285">
    <property type="entry name" value="Sup35"/>
</dbReference>
<dbReference type="InterPro" id="IPR000795">
    <property type="entry name" value="T_Tr_GTP-bd_dom"/>
</dbReference>
<dbReference type="InterPro" id="IPR050100">
    <property type="entry name" value="TRAFAC_GTPase_members"/>
</dbReference>
<dbReference type="InterPro" id="IPR009000">
    <property type="entry name" value="Transl_B-barrel_sf"/>
</dbReference>
<dbReference type="InterPro" id="IPR009001">
    <property type="entry name" value="Transl_elong_EF1A/Init_IF2_C"/>
</dbReference>
<dbReference type="PANTHER" id="PTHR23115">
    <property type="entry name" value="TRANSLATION FACTOR"/>
    <property type="match status" value="1"/>
</dbReference>
<dbReference type="Pfam" id="PF22594">
    <property type="entry name" value="GTP-eEF1A_C"/>
    <property type="match status" value="1"/>
</dbReference>
<dbReference type="Pfam" id="PF00009">
    <property type="entry name" value="GTP_EFTU"/>
    <property type="match status" value="1"/>
</dbReference>
<dbReference type="Pfam" id="PF03144">
    <property type="entry name" value="GTP_EFTU_D2"/>
    <property type="match status" value="1"/>
</dbReference>
<dbReference type="PRINTS" id="PR00315">
    <property type="entry name" value="ELONGATNFCT"/>
</dbReference>
<dbReference type="PRINTS" id="PR01343">
    <property type="entry name" value="YEASTERF"/>
</dbReference>
<dbReference type="SUPFAM" id="SSF50465">
    <property type="entry name" value="EF-Tu/eEF-1alpha/eIF2-gamma C-terminal domain"/>
    <property type="match status" value="1"/>
</dbReference>
<dbReference type="SUPFAM" id="SSF52540">
    <property type="entry name" value="P-loop containing nucleoside triphosphate hydrolases"/>
    <property type="match status" value="1"/>
</dbReference>
<dbReference type="SUPFAM" id="SSF50447">
    <property type="entry name" value="Translation proteins"/>
    <property type="match status" value="1"/>
</dbReference>
<dbReference type="PROSITE" id="PS00301">
    <property type="entry name" value="G_TR_1"/>
    <property type="match status" value="1"/>
</dbReference>
<dbReference type="PROSITE" id="PS51722">
    <property type="entry name" value="G_TR_2"/>
    <property type="match status" value="1"/>
</dbReference>
<comment type="function">
    <text>Involved in translation termination. Stimulates the activity of ERF1. Binds guanine nucleotides.</text>
</comment>
<comment type="subcellular location">
    <subcellularLocation>
        <location evidence="4">Cytoplasm</location>
    </subcellularLocation>
</comment>
<comment type="similarity">
    <text evidence="2">Belongs to the TRAFAC class translation factor GTPase superfamily. Classic translation factor GTPase family. ERF3 subfamily.</text>
</comment>
<proteinExistence type="inferred from homology"/>
<organism>
    <name type="scientific">Zygosaccharomyces rouxii</name>
    <dbReference type="NCBI Taxonomy" id="4956"/>
    <lineage>
        <taxon>Eukaryota</taxon>
        <taxon>Fungi</taxon>
        <taxon>Dikarya</taxon>
        <taxon>Ascomycota</taxon>
        <taxon>Saccharomycotina</taxon>
        <taxon>Saccharomycetes</taxon>
        <taxon>Saccharomycetales</taxon>
        <taxon>Saccharomycetaceae</taxon>
        <taxon>Zygosaccharomyces</taxon>
    </lineage>
</organism>
<reference key="1">
    <citation type="journal article" date="2001" name="Mol. Cell">
        <title>Yeast [PSI+] 'prions' that are crosstransmissible and susceptible beyond a species barrier through a quasi-prion state.</title>
        <authorList>
            <person name="Nakayashiki T."/>
            <person name="Ebihara K."/>
            <person name="Bannai H."/>
            <person name="Nakamura Y."/>
        </authorList>
    </citation>
    <scope>NUCLEOTIDE SEQUENCE [GENOMIC DNA]</scope>
    <source>
        <strain>ATCC 42981 / IAM 12879 / JCM 22060 / S-96</strain>
    </source>
</reference>
<name>ERF3_ZYGRO</name>
<evidence type="ECO:0000250" key="1"/>
<evidence type="ECO:0000255" key="2">
    <source>
        <dbReference type="PROSITE-ProRule" id="PRU01059"/>
    </source>
</evidence>
<evidence type="ECO:0000256" key="3">
    <source>
        <dbReference type="SAM" id="MobiDB-lite"/>
    </source>
</evidence>
<evidence type="ECO:0000305" key="4"/>
<feature type="chain" id="PRO_0000091489" description="Eukaryotic peptide chain release factor GTP-binding subunit">
    <location>
        <begin position="1"/>
        <end position="662"/>
    </location>
</feature>
<feature type="domain" description="tr-type G" evidence="2">
    <location>
        <begin position="235"/>
        <end position="461"/>
    </location>
</feature>
<feature type="region of interest" description="Several sort of repeats">
    <location>
        <begin position="9"/>
        <end position="102"/>
    </location>
</feature>
<feature type="region of interest" description="Disordered" evidence="3">
    <location>
        <begin position="73"/>
        <end position="193"/>
    </location>
</feature>
<feature type="region of interest" description="Charged">
    <location>
        <begin position="103"/>
        <end position="230"/>
    </location>
</feature>
<feature type="region of interest" description="G1" evidence="2">
    <location>
        <begin position="244"/>
        <end position="251"/>
    </location>
</feature>
<feature type="region of interest" description="G2" evidence="2">
    <location>
        <begin position="300"/>
        <end position="304"/>
    </location>
</feature>
<feature type="region of interest" description="G3" evidence="2">
    <location>
        <begin position="321"/>
        <end position="324"/>
    </location>
</feature>
<feature type="region of interest" description="G4" evidence="2">
    <location>
        <begin position="383"/>
        <end position="386"/>
    </location>
</feature>
<feature type="region of interest" description="G5" evidence="2">
    <location>
        <begin position="425"/>
        <end position="427"/>
    </location>
</feature>
<feature type="compositionally biased region" description="Low complexity" evidence="3">
    <location>
        <begin position="73"/>
        <end position="102"/>
    </location>
</feature>
<feature type="compositionally biased region" description="Low complexity" evidence="3">
    <location>
        <begin position="128"/>
        <end position="137"/>
    </location>
</feature>
<feature type="compositionally biased region" description="Basic and acidic residues" evidence="3">
    <location>
        <begin position="143"/>
        <end position="193"/>
    </location>
</feature>
<feature type="binding site" evidence="1">
    <location>
        <begin position="244"/>
        <end position="251"/>
    </location>
    <ligand>
        <name>GTP</name>
        <dbReference type="ChEBI" id="CHEBI:37565"/>
    </ligand>
</feature>
<feature type="binding site" evidence="1">
    <location>
        <begin position="321"/>
        <end position="325"/>
    </location>
    <ligand>
        <name>GTP</name>
        <dbReference type="ChEBI" id="CHEBI:37565"/>
    </ligand>
</feature>
<feature type="binding site" evidence="1">
    <location>
        <begin position="383"/>
        <end position="386"/>
    </location>
    <ligand>
        <name>GTP</name>
        <dbReference type="ChEBI" id="CHEBI:37565"/>
    </ligand>
</feature>
<feature type="modified residue" description="Phosphothreonine" evidence="1">
    <location>
        <position position="318"/>
    </location>
</feature>
<keyword id="KW-0963">Cytoplasm</keyword>
<keyword id="KW-0342">GTP-binding</keyword>
<keyword id="KW-0547">Nucleotide-binding</keyword>
<keyword id="KW-0597">Phosphoprotein</keyword>
<keyword id="KW-0648">Protein biosynthesis</keyword>
<keyword id="KW-0677">Repeat</keyword>
<protein>
    <recommendedName>
        <fullName>Eukaryotic peptide chain release factor GTP-binding subunit</fullName>
    </recommendedName>
    <alternativeName>
        <fullName>ERF-3</fullName>
        <shortName>ERF3</shortName>
    </alternativeName>
    <alternativeName>
        <fullName>ERF2</fullName>
    </alternativeName>
    <alternativeName>
        <fullName>Polypeptide release factor 3</fullName>
    </alternativeName>
    <alternativeName>
        <fullName>Translation release factor 3</fullName>
    </alternativeName>
</protein>
<gene>
    <name type="primary">SUP35</name>
</gene>